<organism>
    <name type="scientific">Bacillus anthracis</name>
    <dbReference type="NCBI Taxonomy" id="1392"/>
    <lineage>
        <taxon>Bacteria</taxon>
        <taxon>Bacillati</taxon>
        <taxon>Bacillota</taxon>
        <taxon>Bacilli</taxon>
        <taxon>Bacillales</taxon>
        <taxon>Bacillaceae</taxon>
        <taxon>Bacillus</taxon>
        <taxon>Bacillus cereus group</taxon>
    </lineage>
</organism>
<name>METN1_BACAN</name>
<protein>
    <recommendedName>
        <fullName evidence="1">Methionine import ATP-binding protein MetN 1</fullName>
        <ecNumber evidence="1">7.4.2.11</ecNumber>
    </recommendedName>
</protein>
<proteinExistence type="inferred from homology"/>
<sequence length="346" mass="38109">MIELKNVSKVFTTKKGNVEALKSTSLQVKKGEVFGIIGYSGAGKSTLIRCVNLLEKPTTGNIIVNEQDLTTLSTKELAKARQKIGMIFQGFNLLKTVTVYENIALPLRLAGVPKLEIEKRVEKYLRIVDLFNRKDAYPSELSGGQKQRVAIARALSHEPEVLLSDEATSALDPETTDSILDLLLKINEEIGITILLITHEMNVIQRICDRVAVMEHGAVVESGTVKDIFTNPQHVTTKKFVNSAFAAKIPAEVQKELQRTGEIVTLSFIGNSSGEPALAVATKRFQVYPNILSGNITQLKHEAYGKLVIHMQGEQNEINHALSFLQEQGIIVEGGRTDYGKQVLFG</sequence>
<evidence type="ECO:0000255" key="1">
    <source>
        <dbReference type="HAMAP-Rule" id="MF_01719"/>
    </source>
</evidence>
<accession>Q81VM2</accession>
<accession>Q6I4L9</accession>
<accession>Q6KYC1</accession>
<comment type="function">
    <text evidence="1">Part of the ABC transporter complex MetNIQ involved in methionine import. Responsible for energy coupling to the transport system.</text>
</comment>
<comment type="catalytic activity">
    <reaction evidence="1">
        <text>L-methionine(out) + ATP + H2O = L-methionine(in) + ADP + phosphate + H(+)</text>
        <dbReference type="Rhea" id="RHEA:29779"/>
        <dbReference type="ChEBI" id="CHEBI:15377"/>
        <dbReference type="ChEBI" id="CHEBI:15378"/>
        <dbReference type="ChEBI" id="CHEBI:30616"/>
        <dbReference type="ChEBI" id="CHEBI:43474"/>
        <dbReference type="ChEBI" id="CHEBI:57844"/>
        <dbReference type="ChEBI" id="CHEBI:456216"/>
        <dbReference type="EC" id="7.4.2.11"/>
    </reaction>
</comment>
<comment type="catalytic activity">
    <reaction evidence="1">
        <text>D-methionine(out) + ATP + H2O = D-methionine(in) + ADP + phosphate + H(+)</text>
        <dbReference type="Rhea" id="RHEA:29767"/>
        <dbReference type="ChEBI" id="CHEBI:15377"/>
        <dbReference type="ChEBI" id="CHEBI:15378"/>
        <dbReference type="ChEBI" id="CHEBI:30616"/>
        <dbReference type="ChEBI" id="CHEBI:43474"/>
        <dbReference type="ChEBI" id="CHEBI:57932"/>
        <dbReference type="ChEBI" id="CHEBI:456216"/>
        <dbReference type="EC" id="7.4.2.11"/>
    </reaction>
</comment>
<comment type="subunit">
    <text evidence="1">The complex is composed of two ATP-binding proteins (MetN), two transmembrane proteins (MetI) and a solute-binding protein (MetQ).</text>
</comment>
<comment type="subcellular location">
    <subcellularLocation>
        <location evidence="1">Cell membrane</location>
        <topology evidence="1">Peripheral membrane protein</topology>
    </subcellularLocation>
</comment>
<comment type="similarity">
    <text evidence="1">Belongs to the ABC transporter superfamily. Methionine importer (TC 3.A.1.24) family.</text>
</comment>
<keyword id="KW-0029">Amino-acid transport</keyword>
<keyword id="KW-0067">ATP-binding</keyword>
<keyword id="KW-1003">Cell membrane</keyword>
<keyword id="KW-0472">Membrane</keyword>
<keyword id="KW-0547">Nucleotide-binding</keyword>
<keyword id="KW-1185">Reference proteome</keyword>
<keyword id="KW-1278">Translocase</keyword>
<keyword id="KW-0813">Transport</keyword>
<gene>
    <name evidence="1" type="primary">metN1</name>
    <name type="ordered locus">BA_0174</name>
    <name type="ordered locus">GBAA_0174</name>
    <name type="ordered locus">BAS0176</name>
</gene>
<reference key="1">
    <citation type="journal article" date="2003" name="Nature">
        <title>The genome sequence of Bacillus anthracis Ames and comparison to closely related bacteria.</title>
        <authorList>
            <person name="Read T.D."/>
            <person name="Peterson S.N."/>
            <person name="Tourasse N.J."/>
            <person name="Baillie L.W."/>
            <person name="Paulsen I.T."/>
            <person name="Nelson K.E."/>
            <person name="Tettelin H."/>
            <person name="Fouts D.E."/>
            <person name="Eisen J.A."/>
            <person name="Gill S.R."/>
            <person name="Holtzapple E.K."/>
            <person name="Okstad O.A."/>
            <person name="Helgason E."/>
            <person name="Rilstone J."/>
            <person name="Wu M."/>
            <person name="Kolonay J.F."/>
            <person name="Beanan M.J."/>
            <person name="Dodson R.J."/>
            <person name="Brinkac L.M."/>
            <person name="Gwinn M.L."/>
            <person name="DeBoy R.T."/>
            <person name="Madpu R."/>
            <person name="Daugherty S.C."/>
            <person name="Durkin A.S."/>
            <person name="Haft D.H."/>
            <person name="Nelson W.C."/>
            <person name="Peterson J.D."/>
            <person name="Pop M."/>
            <person name="Khouri H.M."/>
            <person name="Radune D."/>
            <person name="Benton J.L."/>
            <person name="Mahamoud Y."/>
            <person name="Jiang L."/>
            <person name="Hance I.R."/>
            <person name="Weidman J.F."/>
            <person name="Berry K.J."/>
            <person name="Plaut R.D."/>
            <person name="Wolf A.M."/>
            <person name="Watkins K.L."/>
            <person name="Nierman W.C."/>
            <person name="Hazen A."/>
            <person name="Cline R.T."/>
            <person name="Redmond C."/>
            <person name="Thwaite J.E."/>
            <person name="White O."/>
            <person name="Salzberg S.L."/>
            <person name="Thomason B."/>
            <person name="Friedlander A.M."/>
            <person name="Koehler T.M."/>
            <person name="Hanna P.C."/>
            <person name="Kolstoe A.-B."/>
            <person name="Fraser C.M."/>
        </authorList>
    </citation>
    <scope>NUCLEOTIDE SEQUENCE [LARGE SCALE GENOMIC DNA]</scope>
    <source>
        <strain>Ames / isolate Porton</strain>
    </source>
</reference>
<reference key="2">
    <citation type="submission" date="2004-01" db="EMBL/GenBank/DDBJ databases">
        <title>Complete genome sequence of Bacillus anthracis Sterne.</title>
        <authorList>
            <person name="Brettin T.S."/>
            <person name="Bruce D."/>
            <person name="Challacombe J.F."/>
            <person name="Gilna P."/>
            <person name="Han C."/>
            <person name="Hill K."/>
            <person name="Hitchcock P."/>
            <person name="Jackson P."/>
            <person name="Keim P."/>
            <person name="Longmire J."/>
            <person name="Lucas S."/>
            <person name="Okinaka R."/>
            <person name="Richardson P."/>
            <person name="Rubin E."/>
            <person name="Tice H."/>
        </authorList>
    </citation>
    <scope>NUCLEOTIDE SEQUENCE [LARGE SCALE GENOMIC DNA]</scope>
    <source>
        <strain>Sterne</strain>
    </source>
</reference>
<reference key="3">
    <citation type="journal article" date="2009" name="J. Bacteriol.">
        <title>The complete genome sequence of Bacillus anthracis Ames 'Ancestor'.</title>
        <authorList>
            <person name="Ravel J."/>
            <person name="Jiang L."/>
            <person name="Stanley S.T."/>
            <person name="Wilson M.R."/>
            <person name="Decker R.S."/>
            <person name="Read T.D."/>
            <person name="Worsham P."/>
            <person name="Keim P.S."/>
            <person name="Salzberg S.L."/>
            <person name="Fraser-Liggett C.M."/>
            <person name="Rasko D.A."/>
        </authorList>
    </citation>
    <scope>NUCLEOTIDE SEQUENCE [LARGE SCALE GENOMIC DNA]</scope>
    <source>
        <strain>Ames ancestor</strain>
    </source>
</reference>
<dbReference type="EC" id="7.4.2.11" evidence="1"/>
<dbReference type="EMBL" id="AE016879">
    <property type="protein sequence ID" value="AAP24224.1"/>
    <property type="molecule type" value="Genomic_DNA"/>
</dbReference>
<dbReference type="EMBL" id="AE017225">
    <property type="protein sequence ID" value="AAT52512.1"/>
    <property type="molecule type" value="Genomic_DNA"/>
</dbReference>
<dbReference type="EMBL" id="AE017334">
    <property type="protein sequence ID" value="AAT29258.1"/>
    <property type="molecule type" value="Genomic_DNA"/>
</dbReference>
<dbReference type="RefSeq" id="NP_842738.1">
    <property type="nucleotide sequence ID" value="NC_003997.3"/>
</dbReference>
<dbReference type="RefSeq" id="WP_000571358.1">
    <property type="nucleotide sequence ID" value="NZ_WXXJ01000014.1"/>
</dbReference>
<dbReference type="RefSeq" id="YP_026461.1">
    <property type="nucleotide sequence ID" value="NC_005945.1"/>
</dbReference>
<dbReference type="SMR" id="Q81VM2"/>
<dbReference type="IntAct" id="Q81VM2">
    <property type="interactions" value="1"/>
</dbReference>
<dbReference type="STRING" id="261594.GBAA_0174"/>
<dbReference type="GeneID" id="45020228"/>
<dbReference type="KEGG" id="ban:BA_0174"/>
<dbReference type="KEGG" id="banh:HYU01_00985"/>
<dbReference type="KEGG" id="bar:GBAA_0174"/>
<dbReference type="KEGG" id="bat:BAS0176"/>
<dbReference type="PATRIC" id="fig|198094.11.peg.173"/>
<dbReference type="eggNOG" id="COG1135">
    <property type="taxonomic scope" value="Bacteria"/>
</dbReference>
<dbReference type="HOGENOM" id="CLU_000604_1_3_9"/>
<dbReference type="OMA" id="ESAMIFQ"/>
<dbReference type="OrthoDB" id="9802264at2"/>
<dbReference type="Proteomes" id="UP000000427">
    <property type="component" value="Chromosome"/>
</dbReference>
<dbReference type="Proteomes" id="UP000000594">
    <property type="component" value="Chromosome"/>
</dbReference>
<dbReference type="GO" id="GO:0005886">
    <property type="term" value="C:plasma membrane"/>
    <property type="evidence" value="ECO:0007669"/>
    <property type="project" value="UniProtKB-SubCell"/>
</dbReference>
<dbReference type="GO" id="GO:0033232">
    <property type="term" value="F:ABC-type D-methionine transporter activity"/>
    <property type="evidence" value="ECO:0007669"/>
    <property type="project" value="UniProtKB-EC"/>
</dbReference>
<dbReference type="GO" id="GO:0005524">
    <property type="term" value="F:ATP binding"/>
    <property type="evidence" value="ECO:0007669"/>
    <property type="project" value="UniProtKB-KW"/>
</dbReference>
<dbReference type="GO" id="GO:0016887">
    <property type="term" value="F:ATP hydrolysis activity"/>
    <property type="evidence" value="ECO:0007669"/>
    <property type="project" value="InterPro"/>
</dbReference>
<dbReference type="CDD" id="cd03258">
    <property type="entry name" value="ABC_MetN_methionine_transporter"/>
    <property type="match status" value="1"/>
</dbReference>
<dbReference type="FunFam" id="3.30.70.260:FF:000086">
    <property type="entry name" value="Methionine import ATP-binding protein MetN"/>
    <property type="match status" value="1"/>
</dbReference>
<dbReference type="FunFam" id="3.40.50.300:FF:000233">
    <property type="entry name" value="Methionine import ATP-binding protein MetN"/>
    <property type="match status" value="1"/>
</dbReference>
<dbReference type="Gene3D" id="3.30.70.260">
    <property type="match status" value="1"/>
</dbReference>
<dbReference type="Gene3D" id="3.40.50.300">
    <property type="entry name" value="P-loop containing nucleotide triphosphate hydrolases"/>
    <property type="match status" value="1"/>
</dbReference>
<dbReference type="InterPro" id="IPR003593">
    <property type="entry name" value="AAA+_ATPase"/>
</dbReference>
<dbReference type="InterPro" id="IPR003439">
    <property type="entry name" value="ABC_transporter-like_ATP-bd"/>
</dbReference>
<dbReference type="InterPro" id="IPR017871">
    <property type="entry name" value="ABC_transporter-like_CS"/>
</dbReference>
<dbReference type="InterPro" id="IPR045865">
    <property type="entry name" value="ACT-like_dom_sf"/>
</dbReference>
<dbReference type="InterPro" id="IPR041701">
    <property type="entry name" value="MetN_ABC"/>
</dbReference>
<dbReference type="InterPro" id="IPR050086">
    <property type="entry name" value="MetN_ABC_transporter-like"/>
</dbReference>
<dbReference type="InterPro" id="IPR018449">
    <property type="entry name" value="NIL_domain"/>
</dbReference>
<dbReference type="InterPro" id="IPR027417">
    <property type="entry name" value="P-loop_NTPase"/>
</dbReference>
<dbReference type="PANTHER" id="PTHR43166">
    <property type="entry name" value="AMINO ACID IMPORT ATP-BINDING PROTEIN"/>
    <property type="match status" value="1"/>
</dbReference>
<dbReference type="PANTHER" id="PTHR43166:SF30">
    <property type="entry name" value="METHIONINE IMPORT ATP-BINDING PROTEIN METN"/>
    <property type="match status" value="1"/>
</dbReference>
<dbReference type="Pfam" id="PF00005">
    <property type="entry name" value="ABC_tran"/>
    <property type="match status" value="1"/>
</dbReference>
<dbReference type="Pfam" id="PF09383">
    <property type="entry name" value="NIL"/>
    <property type="match status" value="1"/>
</dbReference>
<dbReference type="SMART" id="SM00382">
    <property type="entry name" value="AAA"/>
    <property type="match status" value="1"/>
</dbReference>
<dbReference type="SMART" id="SM00930">
    <property type="entry name" value="NIL"/>
    <property type="match status" value="1"/>
</dbReference>
<dbReference type="SUPFAM" id="SSF55021">
    <property type="entry name" value="ACT-like"/>
    <property type="match status" value="1"/>
</dbReference>
<dbReference type="SUPFAM" id="SSF52540">
    <property type="entry name" value="P-loop containing nucleoside triphosphate hydrolases"/>
    <property type="match status" value="1"/>
</dbReference>
<dbReference type="PROSITE" id="PS00211">
    <property type="entry name" value="ABC_TRANSPORTER_1"/>
    <property type="match status" value="1"/>
</dbReference>
<dbReference type="PROSITE" id="PS50893">
    <property type="entry name" value="ABC_TRANSPORTER_2"/>
    <property type="match status" value="1"/>
</dbReference>
<dbReference type="PROSITE" id="PS51264">
    <property type="entry name" value="METN"/>
    <property type="match status" value="1"/>
</dbReference>
<feature type="chain" id="PRO_0000270229" description="Methionine import ATP-binding protein MetN 1">
    <location>
        <begin position="1"/>
        <end position="346"/>
    </location>
</feature>
<feature type="domain" description="ABC transporter" evidence="1">
    <location>
        <begin position="2"/>
        <end position="241"/>
    </location>
</feature>
<feature type="binding site" evidence="1">
    <location>
        <begin position="38"/>
        <end position="45"/>
    </location>
    <ligand>
        <name>ATP</name>
        <dbReference type="ChEBI" id="CHEBI:30616"/>
    </ligand>
</feature>